<protein>
    <recommendedName>
        <fullName>PDZ and LIM domain protein 5</fullName>
    </recommendedName>
    <alternativeName>
        <fullName evidence="11">Enigma homolog</fullName>
    </alternativeName>
    <alternativeName>
        <fullName evidence="11">Enigma-like PDZ and LIM domains protein</fullName>
    </alternativeName>
</protein>
<organism>
    <name type="scientific">Rattus norvegicus</name>
    <name type="common">Rat</name>
    <dbReference type="NCBI Taxonomy" id="10116"/>
    <lineage>
        <taxon>Eukaryota</taxon>
        <taxon>Metazoa</taxon>
        <taxon>Chordata</taxon>
        <taxon>Craniata</taxon>
        <taxon>Vertebrata</taxon>
        <taxon>Euteleostomi</taxon>
        <taxon>Mammalia</taxon>
        <taxon>Eutheria</taxon>
        <taxon>Euarchontoglires</taxon>
        <taxon>Glires</taxon>
        <taxon>Rodentia</taxon>
        <taxon>Myomorpha</taxon>
        <taxon>Muroidea</taxon>
        <taxon>Muridae</taxon>
        <taxon>Murinae</taxon>
        <taxon>Rattus</taxon>
    </lineage>
</organism>
<comment type="function">
    <text evidence="7 8 9">May play an important role in the heart development by scaffolding PKC to the Z-disk region (PubMed:20097676, PubMed:8940095). May play a role in the regulation of cardiomyocyte expansion (PubMed:20097676). Isoforms lacking the LIM domains may negatively modulate the scaffolding activity of isoform 1 (PubMed:20097676). Overexpression promotes the development of heart hypertrophy. Contributes to the regulation of dendritic spine morphogenesis in neurons (PubMed:20097676). May be required to restrain postsynaptic growth of excitatory synapses. Isoform 1, but not isoform 2, expression favors spine thinning and elongation (PubMed:19900557).</text>
</comment>
<comment type="subunit">
    <text evidence="6 7 9">Interacts with various PKC isoforms through the LIM domains (PubMed:8940095). Interacts with actin and alpha-actinin through the PDZ domain (PubMed:10833443). Interacts (via LIM domains) with SIPA1L1/SPAR; this interaction may occur preferentially with isoform 1 (PubMed:19900557).</text>
</comment>
<comment type="interaction">
    <interactant intactId="EBI-918433">
        <id>Q62920</id>
    </interactant>
    <interactant intactId="EBI-12559950">
        <id>P68403-1</id>
        <label>Prkcb</label>
    </interactant>
    <organismsDiffer>false</organismsDiffer>
    <experiments>5</experiments>
</comment>
<comment type="subcellular location">
    <molecule>Isoform 1</molecule>
    <subcellularLocation>
        <location evidence="7">Postsynaptic density</location>
    </subcellularLocation>
    <subcellularLocation>
        <location evidence="7">Presynapse</location>
    </subcellularLocation>
    <subcellularLocation>
        <location evidence="7">Postsynapse</location>
    </subcellularLocation>
    <subcellularLocation>
        <location evidence="7">Cytoplasm</location>
        <location evidence="7">Cytosol</location>
    </subcellularLocation>
    <text evidence="7">Detected both at presynaptic and postsynaptic sites, exclusively at excitatory synapses, but not inhibitory synapses, in hippocampal neurons.</text>
</comment>
<comment type="subcellular location">
    <molecule>Isoform 2</molecule>
    <subcellularLocation>
        <location evidence="7">Postsynaptic density</location>
    </subcellularLocation>
    <subcellularLocation>
        <location evidence="7">Presynapse</location>
    </subcellularLocation>
    <subcellularLocation>
        <location evidence="7">Postsynapse</location>
    </subcellularLocation>
    <subcellularLocation>
        <location evidence="7">Cytoplasm</location>
        <location evidence="7">Cytosol</location>
    </subcellularLocation>
    <text evidence="7">Detected both at presynaptic and postsynaptic sites, exclusively at excitatory synapses, but not inhibitory synapses, in hippocampal neurons.</text>
</comment>
<comment type="alternative products">
    <event type="alternative splicing"/>
    <isoform>
        <id>Q62920-1</id>
        <name>1</name>
        <name evidence="10">PDLIM5a</name>
        <sequence type="displayed"/>
    </isoform>
    <isoform>
        <id>Q62920-2</id>
        <name>2</name>
        <name evidence="10">PDLIM5b</name>
        <sequence type="described" ref="VSP_058746"/>
    </isoform>
</comment>
<comment type="tissue specificity">
    <text evidence="7 8 9">Detected in brain, in neurons, including in hippocampal neurons, and glial cells (at protein level). Detected in heart and skeletal muscle.</text>
</comment>
<comment type="developmental stage">
    <text evidence="7">In cultured hippocampal neurons, expression levels of both isoform 1 and isoform 2 increases with in vitro development, with prominent expression coinciding with the completion of synaptogenesis and persisting through mature stages.</text>
</comment>
<proteinExistence type="evidence at protein level"/>
<gene>
    <name type="primary">Pdlim5</name>
    <name evidence="11" type="synonym">Enh</name>
</gene>
<feature type="initiator methionine" description="Removed" evidence="2">
    <location>
        <position position="1"/>
    </location>
</feature>
<feature type="chain" id="PRO_0000075879" description="PDZ and LIM domain protein 5">
    <location>
        <begin position="2"/>
        <end position="591"/>
    </location>
</feature>
<feature type="domain" description="PDZ" evidence="4">
    <location>
        <begin position="2"/>
        <end position="85"/>
    </location>
</feature>
<feature type="domain" description="LIM zinc-binding 1" evidence="3">
    <location>
        <begin position="413"/>
        <end position="472"/>
    </location>
</feature>
<feature type="domain" description="LIM zinc-binding 2" evidence="3">
    <location>
        <begin position="472"/>
        <end position="531"/>
    </location>
</feature>
<feature type="domain" description="LIM zinc-binding 3" evidence="3">
    <location>
        <begin position="531"/>
        <end position="591"/>
    </location>
</feature>
<feature type="region of interest" description="Disordered" evidence="5">
    <location>
        <begin position="125"/>
        <end position="240"/>
    </location>
</feature>
<feature type="region of interest" description="Disordered" evidence="5">
    <location>
        <begin position="255"/>
        <end position="334"/>
    </location>
</feature>
<feature type="region of interest" description="Disordered" evidence="5">
    <location>
        <begin position="348"/>
        <end position="398"/>
    </location>
</feature>
<feature type="compositionally biased region" description="Polar residues" evidence="5">
    <location>
        <begin position="134"/>
        <end position="143"/>
    </location>
</feature>
<feature type="compositionally biased region" description="Low complexity" evidence="5">
    <location>
        <begin position="144"/>
        <end position="161"/>
    </location>
</feature>
<feature type="compositionally biased region" description="Pro residues" evidence="5">
    <location>
        <begin position="162"/>
        <end position="174"/>
    </location>
</feature>
<feature type="compositionally biased region" description="Polar residues" evidence="5">
    <location>
        <begin position="183"/>
        <end position="195"/>
    </location>
</feature>
<feature type="compositionally biased region" description="Polar residues" evidence="5">
    <location>
        <begin position="207"/>
        <end position="217"/>
    </location>
</feature>
<feature type="compositionally biased region" description="Basic and acidic residues" evidence="5">
    <location>
        <begin position="258"/>
        <end position="273"/>
    </location>
</feature>
<feature type="compositionally biased region" description="Basic and acidic residues" evidence="5">
    <location>
        <begin position="293"/>
        <end position="304"/>
    </location>
</feature>
<feature type="compositionally biased region" description="Low complexity" evidence="5">
    <location>
        <begin position="310"/>
        <end position="329"/>
    </location>
</feature>
<feature type="compositionally biased region" description="Polar residues" evidence="5">
    <location>
        <begin position="349"/>
        <end position="380"/>
    </location>
</feature>
<feature type="modified residue" description="N-acetylserine" evidence="2">
    <location>
        <position position="2"/>
    </location>
</feature>
<feature type="modified residue" description="Phosphoserine" evidence="12">
    <location>
        <position position="2"/>
    </location>
</feature>
<feature type="modified residue" description="N6-acetyllysine; alternate" evidence="1">
    <location>
        <position position="89"/>
    </location>
</feature>
<feature type="modified residue" description="N6-succinyllysine; alternate" evidence="1">
    <location>
        <position position="89"/>
    </location>
</feature>
<feature type="modified residue" description="Phosphoserine" evidence="2">
    <location>
        <position position="111"/>
    </location>
</feature>
<feature type="modified residue" description="Phosphoserine" evidence="2">
    <location>
        <position position="134"/>
    </location>
</feature>
<feature type="modified residue" description="Phosphoserine" evidence="2">
    <location>
        <position position="137"/>
    </location>
</feature>
<feature type="modified residue" description="Phosphoserine" evidence="12">
    <location>
        <position position="228"/>
    </location>
</feature>
<feature type="modified residue" description="Phosphoserine" evidence="2">
    <location>
        <position position="260"/>
    </location>
</feature>
<feature type="modified residue" description="Phosphoserine" evidence="2">
    <location>
        <position position="313"/>
    </location>
</feature>
<feature type="modified residue" description="Phosphoserine" evidence="12">
    <location>
        <position position="318"/>
    </location>
</feature>
<feature type="modified residue" description="N6-acetyllysine" evidence="1">
    <location>
        <position position="346"/>
    </location>
</feature>
<feature type="modified residue" description="Phosphoserine" evidence="12">
    <location>
        <position position="355"/>
    </location>
</feature>
<feature type="modified residue" description="Phosphoserine" evidence="2">
    <location>
        <position position="357"/>
    </location>
</feature>
<feature type="cross-link" description="Glycyl lysine isopeptide (Lys-Gly) (interchain with G-Cter in SUMO2); alternate" evidence="2">
    <location>
        <position position="89"/>
    </location>
</feature>
<feature type="splice variant" id="VSP_058746" description="In isoform 2." evidence="10">
    <location>
        <begin position="98"/>
        <end position="206"/>
    </location>
</feature>
<dbReference type="EMBL" id="U48247">
    <property type="protein sequence ID" value="AAC72251.1"/>
    <property type="molecule type" value="mRNA"/>
</dbReference>
<dbReference type="RefSeq" id="NP_445778.1">
    <molecule id="Q62920-1"/>
    <property type="nucleotide sequence ID" value="NM_053326.1"/>
</dbReference>
<dbReference type="RefSeq" id="XP_006233481.1">
    <molecule id="Q62920-2"/>
    <property type="nucleotide sequence ID" value="XM_006233419.5"/>
</dbReference>
<dbReference type="SMR" id="Q62920"/>
<dbReference type="FunCoup" id="Q62920">
    <property type="interactions" value="878"/>
</dbReference>
<dbReference type="IntAct" id="Q62920">
    <property type="interactions" value="4"/>
</dbReference>
<dbReference type="STRING" id="10116.ENSRNOP00000022387"/>
<dbReference type="GlyGen" id="Q62920">
    <property type="glycosylation" value="2 sites, 1 O-linked glycan (1 site)"/>
</dbReference>
<dbReference type="iPTMnet" id="Q62920"/>
<dbReference type="PhosphoSitePlus" id="Q62920"/>
<dbReference type="jPOST" id="Q62920"/>
<dbReference type="PaxDb" id="10116-ENSRNOP00000022387"/>
<dbReference type="GeneID" id="64353"/>
<dbReference type="KEGG" id="rno:64353"/>
<dbReference type="AGR" id="RGD:621076"/>
<dbReference type="CTD" id="10611"/>
<dbReference type="RGD" id="621076">
    <property type="gene designation" value="Pdlim5"/>
</dbReference>
<dbReference type="VEuPathDB" id="HostDB:ENSRNOG00000016419"/>
<dbReference type="eggNOG" id="KOG1703">
    <property type="taxonomic scope" value="Eukaryota"/>
</dbReference>
<dbReference type="HOGENOM" id="CLU_001357_8_1_1"/>
<dbReference type="InParanoid" id="Q62920"/>
<dbReference type="PhylomeDB" id="Q62920"/>
<dbReference type="PRO" id="PR:Q62920"/>
<dbReference type="Proteomes" id="UP000002494">
    <property type="component" value="Chromosome 2"/>
</dbReference>
<dbReference type="Bgee" id="ENSRNOG00000016419">
    <property type="expression patterns" value="Expressed in quadriceps femoris and 19 other cell types or tissues"/>
</dbReference>
<dbReference type="GO" id="GO:0005912">
    <property type="term" value="C:adherens junction"/>
    <property type="evidence" value="ECO:0000318"/>
    <property type="project" value="GO_Central"/>
</dbReference>
<dbReference type="GO" id="GO:0042995">
    <property type="term" value="C:cell projection"/>
    <property type="evidence" value="ECO:0007669"/>
    <property type="project" value="UniProtKB-KW"/>
</dbReference>
<dbReference type="GO" id="GO:0005829">
    <property type="term" value="C:cytosol"/>
    <property type="evidence" value="ECO:0000314"/>
    <property type="project" value="UniProtKB"/>
</dbReference>
<dbReference type="GO" id="GO:0031941">
    <property type="term" value="C:filamentous actin"/>
    <property type="evidence" value="ECO:0000318"/>
    <property type="project" value="GO_Central"/>
</dbReference>
<dbReference type="GO" id="GO:0098978">
    <property type="term" value="C:glutamatergic synapse"/>
    <property type="evidence" value="ECO:0000314"/>
    <property type="project" value="SynGO"/>
</dbReference>
<dbReference type="GO" id="GO:0016020">
    <property type="term" value="C:membrane"/>
    <property type="evidence" value="ECO:0000314"/>
    <property type="project" value="UniProtKB"/>
</dbReference>
<dbReference type="GO" id="GO:0098794">
    <property type="term" value="C:postsynapse"/>
    <property type="evidence" value="ECO:0000314"/>
    <property type="project" value="SynGO"/>
</dbReference>
<dbReference type="GO" id="GO:0014069">
    <property type="term" value="C:postsynaptic density"/>
    <property type="evidence" value="ECO:0000314"/>
    <property type="project" value="UniProtKB"/>
</dbReference>
<dbReference type="GO" id="GO:0098793">
    <property type="term" value="C:presynapse"/>
    <property type="evidence" value="ECO:0007669"/>
    <property type="project" value="UniProtKB-SubCell"/>
</dbReference>
<dbReference type="GO" id="GO:0001725">
    <property type="term" value="C:stress fiber"/>
    <property type="evidence" value="ECO:0000318"/>
    <property type="project" value="GO_Central"/>
</dbReference>
<dbReference type="GO" id="GO:0030018">
    <property type="term" value="C:Z disc"/>
    <property type="evidence" value="ECO:0000266"/>
    <property type="project" value="RGD"/>
</dbReference>
<dbReference type="GO" id="GO:0003779">
    <property type="term" value="F:actin binding"/>
    <property type="evidence" value="ECO:0000314"/>
    <property type="project" value="UniProtKB"/>
</dbReference>
<dbReference type="GO" id="GO:0042805">
    <property type="term" value="F:actinin binding"/>
    <property type="evidence" value="ECO:0000314"/>
    <property type="project" value="UniProtKB"/>
</dbReference>
<dbReference type="GO" id="GO:0046872">
    <property type="term" value="F:metal ion binding"/>
    <property type="evidence" value="ECO:0007669"/>
    <property type="project" value="UniProtKB-KW"/>
</dbReference>
<dbReference type="GO" id="GO:0051371">
    <property type="term" value="F:muscle alpha-actinin binding"/>
    <property type="evidence" value="ECO:0000318"/>
    <property type="project" value="GO_Central"/>
</dbReference>
<dbReference type="GO" id="GO:0005080">
    <property type="term" value="F:protein kinase C binding"/>
    <property type="evidence" value="ECO:0000314"/>
    <property type="project" value="UniProtKB"/>
</dbReference>
<dbReference type="GO" id="GO:0030159">
    <property type="term" value="F:signaling receptor complex adaptor activity"/>
    <property type="evidence" value="ECO:0000303"/>
    <property type="project" value="UniProtKB"/>
</dbReference>
<dbReference type="GO" id="GO:0030036">
    <property type="term" value="P:actin cytoskeleton organization"/>
    <property type="evidence" value="ECO:0000318"/>
    <property type="project" value="GO_Central"/>
</dbReference>
<dbReference type="GO" id="GO:0061049">
    <property type="term" value="P:cell growth involved in cardiac muscle cell development"/>
    <property type="evidence" value="ECO:0000316"/>
    <property type="project" value="BHF-UCL"/>
</dbReference>
<dbReference type="GO" id="GO:0007507">
    <property type="term" value="P:heart development"/>
    <property type="evidence" value="ECO:0000318"/>
    <property type="project" value="GO_Central"/>
</dbReference>
<dbReference type="GO" id="GO:0061061">
    <property type="term" value="P:muscle structure development"/>
    <property type="evidence" value="ECO:0000318"/>
    <property type="project" value="GO_Central"/>
</dbReference>
<dbReference type="GO" id="GO:0061001">
    <property type="term" value="P:regulation of dendritic spine morphogenesis"/>
    <property type="evidence" value="ECO:0000314"/>
    <property type="project" value="UniProtKB"/>
</dbReference>
<dbReference type="GO" id="GO:0150052">
    <property type="term" value="P:regulation of postsynapse assembly"/>
    <property type="evidence" value="ECO:0000314"/>
    <property type="project" value="SynGO"/>
</dbReference>
<dbReference type="GO" id="GO:0051963">
    <property type="term" value="P:regulation of synapse assembly"/>
    <property type="evidence" value="ECO:0000314"/>
    <property type="project" value="UniProtKB"/>
</dbReference>
<dbReference type="CDD" id="cd09453">
    <property type="entry name" value="LIM1_ENH"/>
    <property type="match status" value="1"/>
</dbReference>
<dbReference type="CDD" id="cd06753">
    <property type="entry name" value="PDZ_PDLIM-like"/>
    <property type="match status" value="1"/>
</dbReference>
<dbReference type="FunFam" id="2.30.42.10:FF:000019">
    <property type="entry name" value="LIM domain binding 3 isoform 1"/>
    <property type="match status" value="1"/>
</dbReference>
<dbReference type="FunFam" id="2.10.110.10:FF:000010">
    <property type="entry name" value="PDZ and LIM domain protein 5"/>
    <property type="match status" value="1"/>
</dbReference>
<dbReference type="FunFam" id="2.10.110.10:FF:000014">
    <property type="entry name" value="PDZ and LIM domain protein 5"/>
    <property type="match status" value="1"/>
</dbReference>
<dbReference type="FunFam" id="2.10.110.10:FF:000020">
    <property type="entry name" value="PDZ and LIM domain protein 5"/>
    <property type="match status" value="1"/>
</dbReference>
<dbReference type="Gene3D" id="2.30.42.10">
    <property type="match status" value="1"/>
</dbReference>
<dbReference type="Gene3D" id="2.10.110.10">
    <property type="entry name" value="Cysteine Rich Protein"/>
    <property type="match status" value="3"/>
</dbReference>
<dbReference type="InterPro" id="IPR001478">
    <property type="entry name" value="PDZ"/>
</dbReference>
<dbReference type="InterPro" id="IPR050604">
    <property type="entry name" value="PDZ-LIM_domain"/>
</dbReference>
<dbReference type="InterPro" id="IPR036034">
    <property type="entry name" value="PDZ_sf"/>
</dbReference>
<dbReference type="InterPro" id="IPR001781">
    <property type="entry name" value="Znf_LIM"/>
</dbReference>
<dbReference type="PANTHER" id="PTHR24214:SF32">
    <property type="entry name" value="PDZ AND LIM DOMAIN PROTEIN 5"/>
    <property type="match status" value="1"/>
</dbReference>
<dbReference type="PANTHER" id="PTHR24214">
    <property type="entry name" value="PDZ AND LIM DOMAIN PROTEIN ZASP"/>
    <property type="match status" value="1"/>
</dbReference>
<dbReference type="Pfam" id="PF00412">
    <property type="entry name" value="LIM"/>
    <property type="match status" value="3"/>
</dbReference>
<dbReference type="Pfam" id="PF00595">
    <property type="entry name" value="PDZ"/>
    <property type="match status" value="1"/>
</dbReference>
<dbReference type="SMART" id="SM00132">
    <property type="entry name" value="LIM"/>
    <property type="match status" value="3"/>
</dbReference>
<dbReference type="SMART" id="SM00228">
    <property type="entry name" value="PDZ"/>
    <property type="match status" value="1"/>
</dbReference>
<dbReference type="SUPFAM" id="SSF57716">
    <property type="entry name" value="Glucocorticoid receptor-like (DNA-binding domain)"/>
    <property type="match status" value="3"/>
</dbReference>
<dbReference type="SUPFAM" id="SSF50156">
    <property type="entry name" value="PDZ domain-like"/>
    <property type="match status" value="1"/>
</dbReference>
<dbReference type="PROSITE" id="PS00478">
    <property type="entry name" value="LIM_DOMAIN_1"/>
    <property type="match status" value="2"/>
</dbReference>
<dbReference type="PROSITE" id="PS50023">
    <property type="entry name" value="LIM_DOMAIN_2"/>
    <property type="match status" value="3"/>
</dbReference>
<dbReference type="PROSITE" id="PS50106">
    <property type="entry name" value="PDZ"/>
    <property type="match status" value="1"/>
</dbReference>
<sequence>MSNYNVSLVGPAPWGFRLQGGKDFNMPLTISSLKDGGKASQAHVRIGDVVLSIDGISAQGMTHLEAQNKIKACTGSLNMTLQRASAAAKSEPVAVQKGEPKEVVKPVPITSPAVSKVTSTTNMAYNKVPRPFGSVSSPKVTSIPSPSSAFTPAHAATSSHASPPPVAAVTPPPLSASGLHASANPSAAQCSSPPNTGKPAVHVPRQPTVTSVCSESAQELAEGQRRGSQGDIKQQNGPPRKHIVERNTEFYHIPTHSDASKKRLIEDTEDWRPRTGTTQSRSFRILAQITGTEHLKESENDNAKKANSTPEPSQQSASPLSAAESLESPGSNRPVVAGLRSAAAFKPVGSTSVKSPSWQRPNQAAPSTGRISNSASSSGTGAPMKPAVGPPQPSDQDTLVQRAEHIPAGKRTPMCAHCNQAIRGPFLVALGKSWHPEEFNCAHCKNTMAYIGFVEEKGALYCELCYEKFFAPECGRCQRKILGEVINALKQTWHVSCFVCVACGKPIRNNVFHLEDGEPYCETDYYALFGTICRGCEFPIEAGDMFLEALGSTWHDTCFVCSVCCESLEGQTFFSKKDKPLCKKHAHSVNF</sequence>
<reference key="1">
    <citation type="journal article" date="1996" name="J. Biol. Chem.">
        <title>Protein-protein interaction of zinc finger LIM domains with protein kinase C.</title>
        <authorList>
            <person name="Kuroda S."/>
            <person name="Tokunaga C."/>
            <person name="Kiyohara Y."/>
            <person name="Higuchi O."/>
            <person name="Konishi H."/>
            <person name="Mizuno K."/>
            <person name="Gill G.N."/>
            <person name="Kikkawa U."/>
        </authorList>
    </citation>
    <scope>NUCLEOTIDE SEQUENCE [MRNA] (ISOFORM 1)</scope>
    <scope>SUBCELLULAR LOCATION</scope>
    <scope>INTERACTION WITH PKC</scope>
    <scope>TISSUE SPECIFICITY</scope>
    <source>
        <strain>Sprague-Dawley</strain>
        <tissue>Brain</tissue>
    </source>
</reference>
<reference key="2">
    <citation type="journal article" date="2000" name="Biochem. Biophys. Res. Commun.">
        <title>ENH, containing PDZ and LIM domains, heart/skeletal muscle-specific protein, associates with cytoskeletal proteins through the PDZ domain.</title>
        <authorList>
            <person name="Nakagawa N."/>
            <person name="Hoshijima M."/>
            <person name="Oyasu M."/>
            <person name="Saito N."/>
            <person name="Tanizawa K."/>
            <person name="Kuroda S."/>
        </authorList>
    </citation>
    <scope>INTERACTION WITH ACTIN AND ALPHA-ACTININ</scope>
</reference>
<reference key="3">
    <citation type="journal article" date="2006" name="Proc. Natl. Acad. Sci. U.S.A.">
        <title>Quantitative phosphoproteomics of vasopressin-sensitive renal cells: regulation of aquaporin-2 phosphorylation at two sites.</title>
        <authorList>
            <person name="Hoffert J.D."/>
            <person name="Pisitkun T."/>
            <person name="Wang G."/>
            <person name="Shen R.-F."/>
            <person name="Knepper M.A."/>
        </authorList>
    </citation>
    <scope>IDENTIFICATION BY MASS SPECTROMETRY [LARGE SCALE ANALYSIS]</scope>
</reference>
<reference key="4">
    <citation type="journal article" date="2010" name="Cardiovasc. Res.">
        <title>Splice variants of Enigma homolog, differentially expressed during heart development, promote or prevent hypertrophy.</title>
        <authorList>
            <person name="Yamazaki T."/>
            <person name="Walchli S."/>
            <person name="Fujita T."/>
            <person name="Ryser S."/>
            <person name="Hoshijima M."/>
            <person name="Schlegel W."/>
            <person name="Kuroda S."/>
            <person name="Maturana A.D."/>
        </authorList>
    </citation>
    <scope>FUNCTION</scope>
    <scope>SUBCELLULAR LOCATION</scope>
    <scope>ALTERNATIVE SPLICING</scope>
    <scope>TISSUE SPECIFICITY</scope>
</reference>
<reference key="5">
    <citation type="journal article" date="2010" name="Mol. Cell. Neurosci.">
        <title>Postsynaptic PDLIM5/Enigma homolog binds SPAR and causes dendritic spine shrinkage.</title>
        <authorList>
            <person name="Herrick S."/>
            <person name="Evers D.M."/>
            <person name="Lee J.Y."/>
            <person name="Udagawa N."/>
            <person name="Pak D.T."/>
        </authorList>
    </citation>
    <scope>FUNCTION</scope>
    <scope>SUBCELLULAR LOCATION (ISOFORMS 1 AND 2)</scope>
    <scope>ALTERNATIVE SPLICING (ISOFORMS 1 AND 2)</scope>
    <scope>INTERACTION WITH SIPA1L1</scope>
    <scope>TISSUE SPECIFICITY</scope>
    <scope>DEVELOPMENTAL STAGE</scope>
</reference>
<reference key="6">
    <citation type="journal article" date="2012" name="Nat. Commun.">
        <title>Quantitative maps of protein phosphorylation sites across 14 different rat organs and tissues.</title>
        <authorList>
            <person name="Lundby A."/>
            <person name="Secher A."/>
            <person name="Lage K."/>
            <person name="Nordsborg N.B."/>
            <person name="Dmytriyev A."/>
            <person name="Lundby C."/>
            <person name="Olsen J.V."/>
        </authorList>
    </citation>
    <scope>PHOSPHORYLATION [LARGE SCALE ANALYSIS] AT SER-2; SER-228; SER-318 AND SER-355</scope>
    <scope>IDENTIFICATION BY MASS SPECTROMETRY [LARGE SCALE ANALYSIS]</scope>
</reference>
<evidence type="ECO:0000250" key="1">
    <source>
        <dbReference type="UniProtKB" id="Q8CI51"/>
    </source>
</evidence>
<evidence type="ECO:0000250" key="2">
    <source>
        <dbReference type="UniProtKB" id="Q96HC4"/>
    </source>
</evidence>
<evidence type="ECO:0000255" key="3">
    <source>
        <dbReference type="PROSITE-ProRule" id="PRU00125"/>
    </source>
</evidence>
<evidence type="ECO:0000255" key="4">
    <source>
        <dbReference type="PROSITE-ProRule" id="PRU00143"/>
    </source>
</evidence>
<evidence type="ECO:0000256" key="5">
    <source>
        <dbReference type="SAM" id="MobiDB-lite"/>
    </source>
</evidence>
<evidence type="ECO:0000269" key="6">
    <source>
    </source>
</evidence>
<evidence type="ECO:0000269" key="7">
    <source>
    </source>
</evidence>
<evidence type="ECO:0000269" key="8">
    <source>
    </source>
</evidence>
<evidence type="ECO:0000269" key="9">
    <source>
    </source>
</evidence>
<evidence type="ECO:0000303" key="10">
    <source>
    </source>
</evidence>
<evidence type="ECO:0000303" key="11">
    <source>
    </source>
</evidence>
<evidence type="ECO:0007744" key="12">
    <source>
    </source>
</evidence>
<name>PDLI5_RAT</name>
<keyword id="KW-0007">Acetylation</keyword>
<keyword id="KW-0025">Alternative splicing</keyword>
<keyword id="KW-0966">Cell projection</keyword>
<keyword id="KW-0963">Cytoplasm</keyword>
<keyword id="KW-1017">Isopeptide bond</keyword>
<keyword id="KW-0440">LIM domain</keyword>
<keyword id="KW-0479">Metal-binding</keyword>
<keyword id="KW-0597">Phosphoprotein</keyword>
<keyword id="KW-1185">Reference proteome</keyword>
<keyword id="KW-0677">Repeat</keyword>
<keyword id="KW-0770">Synapse</keyword>
<keyword id="KW-0832">Ubl conjugation</keyword>
<keyword id="KW-0862">Zinc</keyword>
<accession>Q62920</accession>